<feature type="chain" id="PRO_0000327683" description="PRELI domain containing protein 3B">
    <location>
        <begin position="1"/>
        <end position="194"/>
    </location>
</feature>
<feature type="domain" description="PRELI/MSF1" evidence="2">
    <location>
        <begin position="1"/>
        <end position="172"/>
    </location>
</feature>
<feature type="modified residue" description="Phosphoserine" evidence="1">
    <location>
        <position position="46"/>
    </location>
</feature>
<feature type="modified residue" description="Phosphoserine" evidence="1">
    <location>
        <position position="51"/>
    </location>
</feature>
<sequence>MKIWTSEHVFDHPWETVTTAAMQKYPNPMNPSVVGVDVLDRHIDPSGKLHSHRLLSTEWGLPSIVKSLIGAARTKTYVQEHSVVDPVEKTMELKSTNISFTNMVSVDERLIYKPHPQDPDKTILTQEAIITVKGVSLSSYLEGLMASTISSNASKGREAMEWVIHKLNAEIEELTASARGTIRTPMAAAAFAEK</sequence>
<organism>
    <name type="scientific">Macaca fascicularis</name>
    <name type="common">Crab-eating macaque</name>
    <name type="synonym">Cynomolgus monkey</name>
    <dbReference type="NCBI Taxonomy" id="9541"/>
    <lineage>
        <taxon>Eukaryota</taxon>
        <taxon>Metazoa</taxon>
        <taxon>Chordata</taxon>
        <taxon>Craniata</taxon>
        <taxon>Vertebrata</taxon>
        <taxon>Euteleostomi</taxon>
        <taxon>Mammalia</taxon>
        <taxon>Eutheria</taxon>
        <taxon>Euarchontoglires</taxon>
        <taxon>Primates</taxon>
        <taxon>Haplorrhini</taxon>
        <taxon>Catarrhini</taxon>
        <taxon>Cercopithecidae</taxon>
        <taxon>Cercopithecinae</taxon>
        <taxon>Macaca</taxon>
    </lineage>
</organism>
<accession>Q4R5S9</accession>
<evidence type="ECO:0000250" key="1">
    <source>
        <dbReference type="UniProtKB" id="Q6P9U4"/>
    </source>
</evidence>
<evidence type="ECO:0000255" key="2">
    <source>
        <dbReference type="PROSITE-ProRule" id="PRU00158"/>
    </source>
</evidence>
<evidence type="ECO:0000305" key="3"/>
<comment type="similarity">
    <text evidence="3">Belongs to the slowmo family.</text>
</comment>
<dbReference type="EMBL" id="AB168854">
    <property type="protein sequence ID" value="BAE00958.1"/>
    <property type="molecule type" value="mRNA"/>
</dbReference>
<dbReference type="EMBL" id="AB169464">
    <property type="protein sequence ID" value="BAE01546.1"/>
    <property type="molecule type" value="mRNA"/>
</dbReference>
<dbReference type="RefSeq" id="NP_001270240.1">
    <property type="nucleotide sequence ID" value="NM_001283311.1"/>
</dbReference>
<dbReference type="SMR" id="Q4R5S9"/>
<dbReference type="STRING" id="9541.ENSMFAP00000041888"/>
<dbReference type="eggNOG" id="KOG3336">
    <property type="taxonomic scope" value="Eukaryota"/>
</dbReference>
<dbReference type="Proteomes" id="UP000233100">
    <property type="component" value="Unplaced"/>
</dbReference>
<dbReference type="GO" id="GO:0005758">
    <property type="term" value="C:mitochondrial intermembrane space"/>
    <property type="evidence" value="ECO:0007669"/>
    <property type="project" value="InterPro"/>
</dbReference>
<dbReference type="InterPro" id="IPR006797">
    <property type="entry name" value="PRELI/MSF1_dom"/>
</dbReference>
<dbReference type="InterPro" id="IPR037365">
    <property type="entry name" value="Slowmo/Ups"/>
</dbReference>
<dbReference type="PANTHER" id="PTHR11158">
    <property type="entry name" value="MSF1/PX19 RELATED"/>
    <property type="match status" value="1"/>
</dbReference>
<dbReference type="Pfam" id="PF04707">
    <property type="entry name" value="PRELI"/>
    <property type="match status" value="1"/>
</dbReference>
<dbReference type="PROSITE" id="PS50904">
    <property type="entry name" value="PRELI_MSF1"/>
    <property type="match status" value="1"/>
</dbReference>
<name>PLD3B_MACFA</name>
<proteinExistence type="evidence at transcript level"/>
<reference key="1">
    <citation type="submission" date="2005-06" db="EMBL/GenBank/DDBJ databases">
        <title>DNA sequences of macaque genes expressed in brain or testis and its evolutionary implications.</title>
        <authorList>
            <consortium name="International consortium for macaque cDNA sequencing and analysis"/>
        </authorList>
    </citation>
    <scope>NUCLEOTIDE SEQUENCE [LARGE SCALE MRNA]</scope>
    <source>
        <tissue>Testis</tissue>
    </source>
</reference>
<keyword id="KW-0597">Phosphoprotein</keyword>
<keyword id="KW-1185">Reference proteome</keyword>
<gene>
    <name type="primary">PRELID3B</name>
    <name type="synonym">SLMO2</name>
    <name type="ORF">QtsA-15406</name>
    <name type="ORF">QtsA-21201</name>
</gene>
<protein>
    <recommendedName>
        <fullName>PRELI domain containing protein 3B</fullName>
    </recommendedName>
    <alternativeName>
        <fullName>Protein slowmo homolog 2</fullName>
    </alternativeName>
</protein>